<keyword id="KW-0687">Ribonucleoprotein</keyword>
<keyword id="KW-0689">Ribosomal protein</keyword>
<keyword id="KW-0694">RNA-binding</keyword>
<keyword id="KW-0699">rRNA-binding</keyword>
<sequence>MANVVDPRDIILSPVISEKSYGLIEDNVYTFIVHPDSNKTQIKIAIEKIFKVKVDSVNTANRPGKRKRTRTGYGQRKATKRAIVTLAAGSKPIDLFGAPA</sequence>
<gene>
    <name evidence="1" type="primary">rplW</name>
    <name type="ordered locus">Mflv_5047</name>
</gene>
<feature type="chain" id="PRO_1000087223" description="Large ribosomal subunit protein uL23">
    <location>
        <begin position="1"/>
        <end position="100"/>
    </location>
</feature>
<proteinExistence type="inferred from homology"/>
<name>RL23_MYCGI</name>
<protein>
    <recommendedName>
        <fullName evidence="1">Large ribosomal subunit protein uL23</fullName>
    </recommendedName>
    <alternativeName>
        <fullName evidence="2">50S ribosomal protein L23</fullName>
    </alternativeName>
</protein>
<reference key="1">
    <citation type="submission" date="2007-04" db="EMBL/GenBank/DDBJ databases">
        <title>Complete sequence of chromosome of Mycobacterium gilvum PYR-GCK.</title>
        <authorList>
            <consortium name="US DOE Joint Genome Institute"/>
            <person name="Copeland A."/>
            <person name="Lucas S."/>
            <person name="Lapidus A."/>
            <person name="Barry K."/>
            <person name="Detter J.C."/>
            <person name="Glavina del Rio T."/>
            <person name="Hammon N."/>
            <person name="Israni S."/>
            <person name="Dalin E."/>
            <person name="Tice H."/>
            <person name="Pitluck S."/>
            <person name="Chain P."/>
            <person name="Malfatti S."/>
            <person name="Shin M."/>
            <person name="Vergez L."/>
            <person name="Schmutz J."/>
            <person name="Larimer F."/>
            <person name="Land M."/>
            <person name="Hauser L."/>
            <person name="Kyrpides N."/>
            <person name="Mikhailova N."/>
            <person name="Miller C."/>
            <person name="Richardson P."/>
        </authorList>
    </citation>
    <scope>NUCLEOTIDE SEQUENCE [LARGE SCALE GENOMIC DNA]</scope>
    <source>
        <strain>PYR-GCK</strain>
    </source>
</reference>
<accession>A4T1U0</accession>
<dbReference type="EMBL" id="CP000656">
    <property type="protein sequence ID" value="ABP47513.1"/>
    <property type="molecule type" value="Genomic_DNA"/>
</dbReference>
<dbReference type="SMR" id="A4T1U0"/>
<dbReference type="STRING" id="350054.Mflv_5047"/>
<dbReference type="KEGG" id="mgi:Mflv_5047"/>
<dbReference type="eggNOG" id="COG0089">
    <property type="taxonomic scope" value="Bacteria"/>
</dbReference>
<dbReference type="HOGENOM" id="CLU_037562_3_2_11"/>
<dbReference type="OrthoDB" id="9793353at2"/>
<dbReference type="GO" id="GO:1990904">
    <property type="term" value="C:ribonucleoprotein complex"/>
    <property type="evidence" value="ECO:0007669"/>
    <property type="project" value="UniProtKB-KW"/>
</dbReference>
<dbReference type="GO" id="GO:0005840">
    <property type="term" value="C:ribosome"/>
    <property type="evidence" value="ECO:0007669"/>
    <property type="project" value="UniProtKB-KW"/>
</dbReference>
<dbReference type="GO" id="GO:0019843">
    <property type="term" value="F:rRNA binding"/>
    <property type="evidence" value="ECO:0007669"/>
    <property type="project" value="UniProtKB-UniRule"/>
</dbReference>
<dbReference type="GO" id="GO:0003735">
    <property type="term" value="F:structural constituent of ribosome"/>
    <property type="evidence" value="ECO:0007669"/>
    <property type="project" value="InterPro"/>
</dbReference>
<dbReference type="GO" id="GO:0006412">
    <property type="term" value="P:translation"/>
    <property type="evidence" value="ECO:0007669"/>
    <property type="project" value="UniProtKB-UniRule"/>
</dbReference>
<dbReference type="FunFam" id="3.30.70.330:FF:000001">
    <property type="entry name" value="50S ribosomal protein L23"/>
    <property type="match status" value="1"/>
</dbReference>
<dbReference type="Gene3D" id="3.30.70.330">
    <property type="match status" value="1"/>
</dbReference>
<dbReference type="HAMAP" id="MF_01369_B">
    <property type="entry name" value="Ribosomal_uL23_B"/>
    <property type="match status" value="1"/>
</dbReference>
<dbReference type="InterPro" id="IPR012677">
    <property type="entry name" value="Nucleotide-bd_a/b_plait_sf"/>
</dbReference>
<dbReference type="InterPro" id="IPR013025">
    <property type="entry name" value="Ribosomal_uL23-like"/>
</dbReference>
<dbReference type="InterPro" id="IPR012678">
    <property type="entry name" value="Ribosomal_uL23/eL15/eS24_sf"/>
</dbReference>
<dbReference type="InterPro" id="IPR001014">
    <property type="entry name" value="Ribosomal_uL23_CS"/>
</dbReference>
<dbReference type="NCBIfam" id="NF004363">
    <property type="entry name" value="PRK05738.2-4"/>
    <property type="match status" value="1"/>
</dbReference>
<dbReference type="NCBIfam" id="NF004364">
    <property type="entry name" value="PRK05738.2-5"/>
    <property type="match status" value="1"/>
</dbReference>
<dbReference type="PANTHER" id="PTHR11620">
    <property type="entry name" value="60S RIBOSOMAL PROTEIN L23A"/>
    <property type="match status" value="1"/>
</dbReference>
<dbReference type="Pfam" id="PF00276">
    <property type="entry name" value="Ribosomal_L23"/>
    <property type="match status" value="1"/>
</dbReference>
<dbReference type="SUPFAM" id="SSF54189">
    <property type="entry name" value="Ribosomal proteins S24e, L23 and L15e"/>
    <property type="match status" value="1"/>
</dbReference>
<dbReference type="PROSITE" id="PS00050">
    <property type="entry name" value="RIBOSOMAL_L23"/>
    <property type="match status" value="1"/>
</dbReference>
<evidence type="ECO:0000255" key="1">
    <source>
        <dbReference type="HAMAP-Rule" id="MF_01369"/>
    </source>
</evidence>
<evidence type="ECO:0000305" key="2"/>
<comment type="function">
    <text evidence="1">One of the early assembly proteins it binds 23S rRNA. One of the proteins that surrounds the polypeptide exit tunnel on the outside of the ribosome. Forms the main docking site for trigger factor binding to the ribosome.</text>
</comment>
<comment type="subunit">
    <text evidence="1">Part of the 50S ribosomal subunit. Contacts protein L29, and trigger factor when it is bound to the ribosome.</text>
</comment>
<comment type="similarity">
    <text evidence="1">Belongs to the universal ribosomal protein uL23 family.</text>
</comment>
<organism>
    <name type="scientific">Mycolicibacterium gilvum (strain PYR-GCK)</name>
    <name type="common">Mycobacterium gilvum (strain PYR-GCK)</name>
    <dbReference type="NCBI Taxonomy" id="350054"/>
    <lineage>
        <taxon>Bacteria</taxon>
        <taxon>Bacillati</taxon>
        <taxon>Actinomycetota</taxon>
        <taxon>Actinomycetes</taxon>
        <taxon>Mycobacteriales</taxon>
        <taxon>Mycobacteriaceae</taxon>
        <taxon>Mycolicibacterium</taxon>
    </lineage>
</organism>